<dbReference type="EC" id="3.1.3.2"/>
<dbReference type="EMBL" id="U28658">
    <property type="protein sequence ID" value="AAA85503.1"/>
    <property type="molecule type" value="Genomic_DNA"/>
</dbReference>
<dbReference type="PIR" id="JC4285">
    <property type="entry name" value="JC4285"/>
</dbReference>
<dbReference type="SMR" id="P52291"/>
<dbReference type="GlyCosmos" id="P52291">
    <property type="glycosylation" value="6 sites, No reported glycans"/>
</dbReference>
<dbReference type="BRENDA" id="3.1.3.2">
    <property type="organism ID" value="4827"/>
</dbReference>
<dbReference type="GO" id="GO:0009277">
    <property type="term" value="C:fungal-type cell wall"/>
    <property type="evidence" value="ECO:0007669"/>
    <property type="project" value="TreeGrafter"/>
</dbReference>
<dbReference type="GO" id="GO:0003993">
    <property type="term" value="F:acid phosphatase activity"/>
    <property type="evidence" value="ECO:0007669"/>
    <property type="project" value="UniProtKB-EC"/>
</dbReference>
<dbReference type="CDD" id="cd07061">
    <property type="entry name" value="HP_HAP_like"/>
    <property type="match status" value="1"/>
</dbReference>
<dbReference type="Gene3D" id="3.40.50.1240">
    <property type="entry name" value="Phosphoglycerate mutase-like"/>
    <property type="match status" value="1"/>
</dbReference>
<dbReference type="InterPro" id="IPR033379">
    <property type="entry name" value="Acid_Pase_AS"/>
</dbReference>
<dbReference type="InterPro" id="IPR000560">
    <property type="entry name" value="His_Pase_clade-2"/>
</dbReference>
<dbReference type="InterPro" id="IPR029033">
    <property type="entry name" value="His_PPase_superfam"/>
</dbReference>
<dbReference type="InterPro" id="IPR016274">
    <property type="entry name" value="Histidine_acid_Pase_euk"/>
</dbReference>
<dbReference type="PANTHER" id="PTHR20963:SF18">
    <property type="entry name" value="ACID PHOSPHATASE PHO11-RELATED"/>
    <property type="match status" value="1"/>
</dbReference>
<dbReference type="PANTHER" id="PTHR20963">
    <property type="entry name" value="MULTIPLE INOSITOL POLYPHOSPHATE PHOSPHATASE-RELATED"/>
    <property type="match status" value="1"/>
</dbReference>
<dbReference type="Pfam" id="PF00328">
    <property type="entry name" value="His_Phos_2"/>
    <property type="match status" value="1"/>
</dbReference>
<dbReference type="PIRSF" id="PIRSF000894">
    <property type="entry name" value="Acid_phosphatase"/>
    <property type="match status" value="1"/>
</dbReference>
<dbReference type="SUPFAM" id="SSF53254">
    <property type="entry name" value="Phosphoglycerate mutase-like"/>
    <property type="match status" value="1"/>
</dbReference>
<dbReference type="PROSITE" id="PS00616">
    <property type="entry name" value="HIS_ACID_PHOSPHAT_1"/>
    <property type="match status" value="1"/>
</dbReference>
<dbReference type="PROSITE" id="PS00778">
    <property type="entry name" value="HIS_ACID_PHOSPHAT_2"/>
    <property type="match status" value="1"/>
</dbReference>
<gene>
    <name type="primary">PHO1</name>
</gene>
<protein>
    <recommendedName>
        <fullName>Acid phosphatase PHO1</fullName>
        <ecNumber>3.1.3.2</ecNumber>
    </recommendedName>
</protein>
<accession>P52291</accession>
<organism>
    <name type="scientific">Komagataella pastoris</name>
    <name type="common">Yeast</name>
    <name type="synonym">Pichia pastoris</name>
    <dbReference type="NCBI Taxonomy" id="4922"/>
    <lineage>
        <taxon>Eukaryota</taxon>
        <taxon>Fungi</taxon>
        <taxon>Dikarya</taxon>
        <taxon>Ascomycota</taxon>
        <taxon>Saccharomycotina</taxon>
        <taxon>Pichiomycetes</taxon>
        <taxon>Pichiales</taxon>
        <taxon>Pichiaceae</taxon>
        <taxon>Komagataella</taxon>
    </lineage>
</organism>
<reference key="1">
    <citation type="journal article" date="1995" name="Gene">
        <title>An inducible acid phosphatase from the yeast Pichia pastoris: characterization of the gene and its product.</title>
        <authorList>
            <person name="Payne W.E."/>
            <person name="Gannon P.M."/>
            <person name="Kaiser C.A."/>
        </authorList>
    </citation>
    <scope>NUCLEOTIDE SEQUENCE [GENOMIC DNA]</scope>
</reference>
<evidence type="ECO:0000250" key="1"/>
<evidence type="ECO:0000255" key="2"/>
<evidence type="ECO:0000305" key="3"/>
<proteinExistence type="evidence at transcript level"/>
<comment type="catalytic activity">
    <reaction>
        <text>a phosphate monoester + H2O = an alcohol + phosphate</text>
        <dbReference type="Rhea" id="RHEA:15017"/>
        <dbReference type="ChEBI" id="CHEBI:15377"/>
        <dbReference type="ChEBI" id="CHEBI:30879"/>
        <dbReference type="ChEBI" id="CHEBI:43474"/>
        <dbReference type="ChEBI" id="CHEBI:67140"/>
        <dbReference type="EC" id="3.1.3.2"/>
    </reaction>
</comment>
<comment type="induction">
    <text>By phosphate starvation.</text>
</comment>
<comment type="similarity">
    <text evidence="3">Belongs to the histidine acid phosphatase family.</text>
</comment>
<name>PPA1_PICPA</name>
<keyword id="KW-0325">Glycoprotein</keyword>
<keyword id="KW-0378">Hydrolase</keyword>
<keyword id="KW-0732">Signal</keyword>
<keyword id="KW-0346">Stress response</keyword>
<sequence>MFSPILSLEIILALATLQSVFAVELQHVLGVNDRPYPQRTDDQYNILRHLGGLGPYIGYNGWGIAAESEIESCTIDQAHLLMRHGERYPSTNVGKQLEALYQKLLDADVEVPTGPLSFFQDYDYFVSDAAWYEQETTKGFYSGLNTAFDFGTTLRERYDHLINTSEEGKKLSVWAGSQERVVDTAKYFAQGFMKSNYTDMVEVVALEEEKSQGLNSLTARISCPNYNSHIYKDGDFPNDIAEREADRLNTLSPGFNITADDIPTIALYCGFELNVRGESSFCDVLSREALLYTAYLRDLGWYYNVGNGNPLGKTIGYVYANATRQLLENTEADPRDYPLYFSFSHDTDLLQVFTSLGLFNVTDLPLDQIQFQTSFKSTEIVPMGARLLTERLLCTVEGEEKYYVRTILNDAVFPLSDCSSGPGFSCPLNDYVSRLEALNEDSDFAENCGVPKNASYPLELSFFWDDLS</sequence>
<feature type="signal peptide" evidence="2">
    <location>
        <begin position="1"/>
        <end position="22"/>
    </location>
</feature>
<feature type="chain" id="PRO_0000023959" description="Acid phosphatase PHO1">
    <location>
        <begin position="23"/>
        <end position="468"/>
    </location>
</feature>
<feature type="active site" description="Nucleophile" evidence="1">
    <location>
        <position position="84"/>
    </location>
</feature>
<feature type="active site" description="Proton donor" evidence="1">
    <location>
        <position position="346"/>
    </location>
</feature>
<feature type="glycosylation site" description="N-linked (GlcNAc...) asparagine" evidence="2">
    <location>
        <position position="163"/>
    </location>
</feature>
<feature type="glycosylation site" description="N-linked (GlcNAc...) asparagine" evidence="2">
    <location>
        <position position="196"/>
    </location>
</feature>
<feature type="glycosylation site" description="N-linked (GlcNAc...) asparagine" evidence="2">
    <location>
        <position position="256"/>
    </location>
</feature>
<feature type="glycosylation site" description="N-linked (GlcNAc...) asparagine" evidence="2">
    <location>
        <position position="321"/>
    </location>
</feature>
<feature type="glycosylation site" description="N-linked (GlcNAc...) asparagine" evidence="2">
    <location>
        <position position="360"/>
    </location>
</feature>
<feature type="glycosylation site" description="N-linked (GlcNAc...) asparagine" evidence="2">
    <location>
        <position position="453"/>
    </location>
</feature>